<keyword id="KW-0143">Chaperone</keyword>
<keyword id="KW-0963">Cytoplasm</keyword>
<keyword id="KW-0614">Plasmid</keyword>
<keyword id="KW-0843">Virulence</keyword>
<comment type="function">
    <text evidence="1">Assists the correct folding of nascent IpaB. Once it is bound to IpaB, it binds to IpaC and impedes their premature association that would lead to their degradation in the absence of IpcG (By similarity).</text>
</comment>
<comment type="subcellular location">
    <subcellularLocation>
        <location evidence="1">Cytoplasm</location>
    </subcellularLocation>
</comment>
<comment type="similarity">
    <text evidence="2">Belongs to the LcrH/SycD chaperone family.</text>
</comment>
<protein>
    <recommendedName>
        <fullName>Chaperone protein IpgC</fullName>
    </recommendedName>
</protein>
<sequence>MSLNITENESISTAVIDAINSGATLKDINAIPDDMMDDIYSYAYDFYNKGRIEEAEVFFRFLCIYDFYNVDYIMGLAAIYQIKEQFQQAADLYAVAFALGKNDYTPVFHTGQCQLRLKAPLKAKECFELVIQHSNDEKLKIKAQSYLDAIQDIKE</sequence>
<evidence type="ECO:0000250" key="1"/>
<evidence type="ECO:0000305" key="2"/>
<proteinExistence type="inferred from homology"/>
<geneLocation type="plasmid">
    <name>Invasion</name>
</geneLocation>
<reference key="1">
    <citation type="journal article" date="1991" name="Mol. Microbiol.">
        <title>Nucleotide sequence of the ipaBCD structural genes of Shigella dysenteriae.</title>
        <authorList>
            <person name="Yao R."/>
            <person name="Palchaudhuri S."/>
        </authorList>
    </citation>
    <scope>NUCLEOTIDE SEQUENCE [GENOMIC DNA]</scope>
    <source>
        <strain>CG097</strain>
    </source>
</reference>
<gene>
    <name type="primary">ipgC</name>
    <name type="synonym">ippI</name>
</gene>
<name>IPGC_SHIDY</name>
<feature type="chain" id="PRO_0000206483" description="Chaperone protein IpgC">
    <location>
        <begin position="1"/>
        <end position="155"/>
    </location>
</feature>
<accession>P0A2U5</accession>
<accession>P18008</accession>
<organism>
    <name type="scientific">Shigella dysenteriae</name>
    <dbReference type="NCBI Taxonomy" id="622"/>
    <lineage>
        <taxon>Bacteria</taxon>
        <taxon>Pseudomonadati</taxon>
        <taxon>Pseudomonadota</taxon>
        <taxon>Gammaproteobacteria</taxon>
        <taxon>Enterobacterales</taxon>
        <taxon>Enterobacteriaceae</taxon>
        <taxon>Shigella</taxon>
    </lineage>
</organism>
<dbReference type="EMBL" id="X60777">
    <property type="protein sequence ID" value="CAA43189.1"/>
    <property type="molecule type" value="Genomic_DNA"/>
</dbReference>
<dbReference type="PIR" id="S15576">
    <property type="entry name" value="S15576"/>
</dbReference>
<dbReference type="RefSeq" id="WP_000055835.1">
    <property type="nucleotide sequence ID" value="NZ_UAUQ01000015.1"/>
</dbReference>
<dbReference type="SMR" id="P0A2U5"/>
<dbReference type="OMA" id="CNIMKDS"/>
<dbReference type="GO" id="GO:0005737">
    <property type="term" value="C:cytoplasm"/>
    <property type="evidence" value="ECO:0007669"/>
    <property type="project" value="UniProtKB-SubCell"/>
</dbReference>
<dbReference type="FunFam" id="1.25.40.10:FF:000100">
    <property type="entry name" value="Type III secretion system translocator chaperone SicA"/>
    <property type="match status" value="1"/>
</dbReference>
<dbReference type="Gene3D" id="1.25.40.10">
    <property type="entry name" value="Tetratricopeptide repeat domain"/>
    <property type="match status" value="1"/>
</dbReference>
<dbReference type="InterPro" id="IPR005415">
    <property type="entry name" value="T3SS_Ca_resp_chp_LcrH/SycD"/>
</dbReference>
<dbReference type="InterPro" id="IPR016379">
    <property type="entry name" value="T3SS_Ca_resp_chp_LcrH/SycD_sub"/>
</dbReference>
<dbReference type="InterPro" id="IPR011716">
    <property type="entry name" value="TPR-3"/>
</dbReference>
<dbReference type="InterPro" id="IPR011990">
    <property type="entry name" value="TPR-like_helical_dom_sf"/>
</dbReference>
<dbReference type="NCBIfam" id="TIGR02552">
    <property type="entry name" value="LcrH_SycD"/>
    <property type="match status" value="1"/>
</dbReference>
<dbReference type="NCBIfam" id="NF011859">
    <property type="entry name" value="PRK15331.1"/>
    <property type="match status" value="1"/>
</dbReference>
<dbReference type="Pfam" id="PF07720">
    <property type="entry name" value="TPR_3"/>
    <property type="match status" value="2"/>
</dbReference>
<dbReference type="PIRSF" id="PIRSF003165">
    <property type="entry name" value="Chaperone_SicA"/>
    <property type="match status" value="1"/>
</dbReference>
<dbReference type="PRINTS" id="PR01595">
    <property type="entry name" value="SYCDCHAPRONE"/>
</dbReference>
<dbReference type="SUPFAM" id="SSF48452">
    <property type="entry name" value="TPR-like"/>
    <property type="match status" value="1"/>
</dbReference>